<feature type="chain" id="PRO_1000133433" description="Isopentenyl-diphosphate delta-isomerase">
    <location>
        <begin position="1"/>
        <end position="336"/>
    </location>
</feature>
<feature type="binding site" evidence="1">
    <location>
        <begin position="5"/>
        <end position="6"/>
    </location>
    <ligand>
        <name>substrate</name>
    </ligand>
</feature>
<feature type="binding site" evidence="1">
    <location>
        <begin position="60"/>
        <end position="62"/>
    </location>
    <ligand>
        <name>FMN</name>
        <dbReference type="ChEBI" id="CHEBI:58210"/>
    </ligand>
</feature>
<feature type="binding site" evidence="1">
    <location>
        <position position="90"/>
    </location>
    <ligand>
        <name>FMN</name>
        <dbReference type="ChEBI" id="CHEBI:58210"/>
    </ligand>
</feature>
<feature type="binding site" evidence="1">
    <location>
        <position position="117"/>
    </location>
    <ligand>
        <name>FMN</name>
        <dbReference type="ChEBI" id="CHEBI:58210"/>
    </ligand>
</feature>
<feature type="binding site" evidence="1">
    <location>
        <position position="147"/>
    </location>
    <ligand>
        <name>substrate</name>
    </ligand>
</feature>
<feature type="binding site" evidence="1">
    <location>
        <position position="148"/>
    </location>
    <ligand>
        <name>Mg(2+)</name>
        <dbReference type="ChEBI" id="CHEBI:18420"/>
    </ligand>
</feature>
<feature type="binding site" evidence="1">
    <location>
        <position position="179"/>
    </location>
    <ligand>
        <name>FMN</name>
        <dbReference type="ChEBI" id="CHEBI:58210"/>
    </ligand>
</feature>
<feature type="binding site" evidence="1">
    <location>
        <position position="204"/>
    </location>
    <ligand>
        <name>FMN</name>
        <dbReference type="ChEBI" id="CHEBI:58210"/>
    </ligand>
</feature>
<feature type="binding site" evidence="1">
    <location>
        <position position="209"/>
    </location>
    <ligand>
        <name>FMN</name>
        <dbReference type="ChEBI" id="CHEBI:58210"/>
    </ligand>
</feature>
<feature type="binding site" evidence="1">
    <location>
        <begin position="253"/>
        <end position="255"/>
    </location>
    <ligand>
        <name>FMN</name>
        <dbReference type="ChEBI" id="CHEBI:58210"/>
    </ligand>
</feature>
<feature type="binding site" evidence="1">
    <location>
        <begin position="274"/>
        <end position="275"/>
    </location>
    <ligand>
        <name>FMN</name>
        <dbReference type="ChEBI" id="CHEBI:58210"/>
    </ligand>
</feature>
<reference key="1">
    <citation type="journal article" date="2010" name="Genome Biol.">
        <title>Structure and dynamics of the pan-genome of Streptococcus pneumoniae and closely related species.</title>
        <authorList>
            <person name="Donati C."/>
            <person name="Hiller N.L."/>
            <person name="Tettelin H."/>
            <person name="Muzzi A."/>
            <person name="Croucher N.J."/>
            <person name="Angiuoli S.V."/>
            <person name="Oggioni M."/>
            <person name="Dunning Hotopp J.C."/>
            <person name="Hu F.Z."/>
            <person name="Riley D.R."/>
            <person name="Covacci A."/>
            <person name="Mitchell T.J."/>
            <person name="Bentley S.D."/>
            <person name="Kilian M."/>
            <person name="Ehrlich G.D."/>
            <person name="Rappuoli R."/>
            <person name="Moxon E.R."/>
            <person name="Masignani V."/>
        </authorList>
    </citation>
    <scope>NUCLEOTIDE SEQUENCE [LARGE SCALE GENOMIC DNA]</scope>
    <source>
        <strain>70585</strain>
    </source>
</reference>
<organism>
    <name type="scientific">Streptococcus pneumoniae (strain 70585)</name>
    <dbReference type="NCBI Taxonomy" id="488221"/>
    <lineage>
        <taxon>Bacteria</taxon>
        <taxon>Bacillati</taxon>
        <taxon>Bacillota</taxon>
        <taxon>Bacilli</taxon>
        <taxon>Lactobacillales</taxon>
        <taxon>Streptococcaceae</taxon>
        <taxon>Streptococcus</taxon>
    </lineage>
</organism>
<sequence>MTTNRKDEHILYALEQKSSYNSFDEVELIHSSLPLYNLDEIDLSTEFAGRKWDFPFYINAMTGGSNKGREINQKLAQVAESCGILFVTGSYSAALKNPTDDSFSVKSSHPNLLLGTNIGLDKPVELGLQTVEEMNPVLLQVHVNVMQELLMPEGERKFRSWQSHLADYSKQIPVPIVLKEVGFGMDAKTIERAYEFGVRTVDLSGRGGTSFAYIENRRSGQRDYLNQWGQSTMQALLNAQEWKDKVELLVSGGVRNPLDMIKCLVFGAKAVGLSRTVLELVETYTVEEVIGIVQGWKADLRLIMCSLNCATIADLQKVDYLLYGKLKEANDQMKKA</sequence>
<protein>
    <recommendedName>
        <fullName evidence="1">Isopentenyl-diphosphate delta-isomerase</fullName>
        <shortName evidence="1">IPP isomerase</shortName>
        <ecNumber evidence="1">5.3.3.2</ecNumber>
    </recommendedName>
    <alternativeName>
        <fullName evidence="1">Isopentenyl diphosphate:dimethylallyl diphosphate isomerase</fullName>
    </alternativeName>
    <alternativeName>
        <fullName evidence="1">Isopentenyl pyrophosphate isomerase</fullName>
    </alternativeName>
    <alternativeName>
        <fullName evidence="1">Type 2 isopentenyl diphosphate isomerase</fullName>
        <shortName evidence="1">IDI-2</shortName>
    </alternativeName>
</protein>
<gene>
    <name evidence="1" type="primary">fni</name>
    <name type="ordered locus">SP70585_0455</name>
</gene>
<keyword id="KW-0963">Cytoplasm</keyword>
<keyword id="KW-0285">Flavoprotein</keyword>
<keyword id="KW-0288">FMN</keyword>
<keyword id="KW-0413">Isomerase</keyword>
<keyword id="KW-0414">Isoprene biosynthesis</keyword>
<keyword id="KW-0460">Magnesium</keyword>
<keyword id="KW-0479">Metal-binding</keyword>
<keyword id="KW-0521">NADP</keyword>
<dbReference type="EC" id="5.3.3.2" evidence="1"/>
<dbReference type="EMBL" id="CP000918">
    <property type="protein sequence ID" value="ACO16601.1"/>
    <property type="molecule type" value="Genomic_DNA"/>
</dbReference>
<dbReference type="RefSeq" id="WP_000210619.1">
    <property type="nucleotide sequence ID" value="NC_012468.1"/>
</dbReference>
<dbReference type="SMR" id="C1C5C3"/>
<dbReference type="GeneID" id="45652153"/>
<dbReference type="KEGG" id="snm:SP70585_0455"/>
<dbReference type="HOGENOM" id="CLU_065515_0_0_9"/>
<dbReference type="Proteomes" id="UP000002211">
    <property type="component" value="Chromosome"/>
</dbReference>
<dbReference type="GO" id="GO:0005737">
    <property type="term" value="C:cytoplasm"/>
    <property type="evidence" value="ECO:0007669"/>
    <property type="project" value="UniProtKB-SubCell"/>
</dbReference>
<dbReference type="GO" id="GO:0010181">
    <property type="term" value="F:FMN binding"/>
    <property type="evidence" value="ECO:0007669"/>
    <property type="project" value="UniProtKB-UniRule"/>
</dbReference>
<dbReference type="GO" id="GO:0004452">
    <property type="term" value="F:isopentenyl-diphosphate delta-isomerase activity"/>
    <property type="evidence" value="ECO:0007669"/>
    <property type="project" value="UniProtKB-UniRule"/>
</dbReference>
<dbReference type="GO" id="GO:0000287">
    <property type="term" value="F:magnesium ion binding"/>
    <property type="evidence" value="ECO:0007669"/>
    <property type="project" value="UniProtKB-UniRule"/>
</dbReference>
<dbReference type="GO" id="GO:0070402">
    <property type="term" value="F:NADPH binding"/>
    <property type="evidence" value="ECO:0007669"/>
    <property type="project" value="UniProtKB-UniRule"/>
</dbReference>
<dbReference type="GO" id="GO:0016491">
    <property type="term" value="F:oxidoreductase activity"/>
    <property type="evidence" value="ECO:0007669"/>
    <property type="project" value="InterPro"/>
</dbReference>
<dbReference type="GO" id="GO:0008299">
    <property type="term" value="P:isoprenoid biosynthetic process"/>
    <property type="evidence" value="ECO:0007669"/>
    <property type="project" value="UniProtKB-UniRule"/>
</dbReference>
<dbReference type="CDD" id="cd02811">
    <property type="entry name" value="IDI-2_FMN"/>
    <property type="match status" value="1"/>
</dbReference>
<dbReference type="Gene3D" id="3.20.20.70">
    <property type="entry name" value="Aldolase class I"/>
    <property type="match status" value="1"/>
</dbReference>
<dbReference type="HAMAP" id="MF_00354">
    <property type="entry name" value="Idi_2"/>
    <property type="match status" value="1"/>
</dbReference>
<dbReference type="InterPro" id="IPR013785">
    <property type="entry name" value="Aldolase_TIM"/>
</dbReference>
<dbReference type="InterPro" id="IPR000262">
    <property type="entry name" value="FMN-dep_DH"/>
</dbReference>
<dbReference type="InterPro" id="IPR011179">
    <property type="entry name" value="IPdP_isomerase"/>
</dbReference>
<dbReference type="NCBIfam" id="TIGR02151">
    <property type="entry name" value="IPP_isom_2"/>
    <property type="match status" value="1"/>
</dbReference>
<dbReference type="PANTHER" id="PTHR43665">
    <property type="entry name" value="ISOPENTENYL-DIPHOSPHATE DELTA-ISOMERASE"/>
    <property type="match status" value="1"/>
</dbReference>
<dbReference type="PANTHER" id="PTHR43665:SF1">
    <property type="entry name" value="ISOPENTENYL-DIPHOSPHATE DELTA-ISOMERASE"/>
    <property type="match status" value="1"/>
</dbReference>
<dbReference type="Pfam" id="PF01070">
    <property type="entry name" value="FMN_dh"/>
    <property type="match status" value="1"/>
</dbReference>
<dbReference type="PIRSF" id="PIRSF003314">
    <property type="entry name" value="IPP_isomerase"/>
    <property type="match status" value="1"/>
</dbReference>
<dbReference type="SUPFAM" id="SSF51395">
    <property type="entry name" value="FMN-linked oxidoreductases"/>
    <property type="match status" value="1"/>
</dbReference>
<evidence type="ECO:0000255" key="1">
    <source>
        <dbReference type="HAMAP-Rule" id="MF_00354"/>
    </source>
</evidence>
<name>IDI2_STRP7</name>
<proteinExistence type="inferred from homology"/>
<accession>C1C5C3</accession>
<comment type="function">
    <text evidence="1">Involved in the biosynthesis of isoprenoids. Catalyzes the 1,3-allylic rearrangement of the homoallylic substrate isopentenyl (IPP) to its allylic isomer, dimethylallyl diphosphate (DMAPP).</text>
</comment>
<comment type="catalytic activity">
    <reaction evidence="1">
        <text>isopentenyl diphosphate = dimethylallyl diphosphate</text>
        <dbReference type="Rhea" id="RHEA:23284"/>
        <dbReference type="ChEBI" id="CHEBI:57623"/>
        <dbReference type="ChEBI" id="CHEBI:128769"/>
        <dbReference type="EC" id="5.3.3.2"/>
    </reaction>
</comment>
<comment type="cofactor">
    <cofactor evidence="1">
        <name>FMN</name>
        <dbReference type="ChEBI" id="CHEBI:58210"/>
    </cofactor>
</comment>
<comment type="cofactor">
    <cofactor evidence="1">
        <name>NADPH</name>
        <dbReference type="ChEBI" id="CHEBI:57783"/>
    </cofactor>
</comment>
<comment type="cofactor">
    <cofactor evidence="1">
        <name>Mg(2+)</name>
        <dbReference type="ChEBI" id="CHEBI:18420"/>
    </cofactor>
</comment>
<comment type="subunit">
    <text evidence="1">Homooctamer. Dimer of tetramers.</text>
</comment>
<comment type="subcellular location">
    <subcellularLocation>
        <location evidence="1">Cytoplasm</location>
    </subcellularLocation>
</comment>
<comment type="similarity">
    <text evidence="1">Belongs to the IPP isomerase type 2 family.</text>
</comment>